<reference key="1">
    <citation type="journal article" date="2006" name="Mol. Microbiol.">
        <title>Role of pathogenicity island-associated integrases in the genome plasticity of uropathogenic Escherichia coli strain 536.</title>
        <authorList>
            <person name="Hochhut B."/>
            <person name="Wilde C."/>
            <person name="Balling G."/>
            <person name="Middendorf B."/>
            <person name="Dobrindt U."/>
            <person name="Brzuszkiewicz E."/>
            <person name="Gottschalk G."/>
            <person name="Carniel E."/>
            <person name="Hacker J."/>
        </authorList>
    </citation>
    <scope>NUCLEOTIDE SEQUENCE [LARGE SCALE GENOMIC DNA]</scope>
    <source>
        <strain>536 / UPEC</strain>
    </source>
</reference>
<proteinExistence type="inferred from homology"/>
<feature type="chain" id="PRO_1000058824" description="Adenylate kinase">
    <location>
        <begin position="1"/>
        <end position="214"/>
    </location>
</feature>
<feature type="region of interest" description="NMP" evidence="2">
    <location>
        <begin position="30"/>
        <end position="59"/>
    </location>
</feature>
<feature type="region of interest" description="LID">
    <location>
        <begin position="122"/>
        <end position="159"/>
    </location>
</feature>
<feature type="binding site" evidence="2">
    <location>
        <begin position="10"/>
        <end position="15"/>
    </location>
    <ligand>
        <name>ATP</name>
        <dbReference type="ChEBI" id="CHEBI:30616"/>
    </ligand>
</feature>
<feature type="binding site" evidence="2">
    <location>
        <position position="31"/>
    </location>
    <ligand>
        <name>AMP</name>
        <dbReference type="ChEBI" id="CHEBI:456215"/>
    </ligand>
</feature>
<feature type="binding site" evidence="2">
    <location>
        <position position="36"/>
    </location>
    <ligand>
        <name>AMP</name>
        <dbReference type="ChEBI" id="CHEBI:456215"/>
    </ligand>
</feature>
<feature type="binding site" evidence="2">
    <location>
        <begin position="57"/>
        <end position="59"/>
    </location>
    <ligand>
        <name>AMP</name>
        <dbReference type="ChEBI" id="CHEBI:456215"/>
    </ligand>
</feature>
<feature type="binding site" evidence="2">
    <location>
        <begin position="85"/>
        <end position="88"/>
    </location>
    <ligand>
        <name>AMP</name>
        <dbReference type="ChEBI" id="CHEBI:456215"/>
    </ligand>
</feature>
<feature type="binding site" evidence="2">
    <location>
        <position position="92"/>
    </location>
    <ligand>
        <name>AMP</name>
        <dbReference type="ChEBI" id="CHEBI:456215"/>
    </ligand>
</feature>
<feature type="binding site" evidence="2">
    <location>
        <position position="123"/>
    </location>
    <ligand>
        <name>ATP</name>
        <dbReference type="ChEBI" id="CHEBI:30616"/>
    </ligand>
</feature>
<feature type="binding site" evidence="2">
    <location>
        <begin position="132"/>
        <end position="133"/>
    </location>
    <ligand>
        <name>ATP</name>
        <dbReference type="ChEBI" id="CHEBI:30616"/>
    </ligand>
</feature>
<feature type="binding site" evidence="2">
    <location>
        <position position="156"/>
    </location>
    <ligand>
        <name>AMP</name>
        <dbReference type="ChEBI" id="CHEBI:456215"/>
    </ligand>
</feature>
<feature type="binding site" evidence="2">
    <location>
        <position position="167"/>
    </location>
    <ligand>
        <name>AMP</name>
        <dbReference type="ChEBI" id="CHEBI:456215"/>
    </ligand>
</feature>
<feature type="binding site" evidence="2">
    <location>
        <position position="200"/>
    </location>
    <ligand>
        <name>ATP</name>
        <dbReference type="ChEBI" id="CHEBI:30616"/>
    </ligand>
</feature>
<feature type="modified residue" description="N6-acetyllysine" evidence="1">
    <location>
        <position position="192"/>
    </location>
</feature>
<keyword id="KW-0007">Acetylation</keyword>
<keyword id="KW-0067">ATP-binding</keyword>
<keyword id="KW-0963">Cytoplasm</keyword>
<keyword id="KW-0418">Kinase</keyword>
<keyword id="KW-0545">Nucleotide biosynthesis</keyword>
<keyword id="KW-0547">Nucleotide-binding</keyword>
<keyword id="KW-0808">Transferase</keyword>
<dbReference type="EC" id="2.7.4.3" evidence="2"/>
<dbReference type="EMBL" id="CP000247">
    <property type="protein sequence ID" value="ABG68564.1"/>
    <property type="molecule type" value="Genomic_DNA"/>
</dbReference>
<dbReference type="RefSeq" id="WP_001313630.1">
    <property type="nucleotide sequence ID" value="NC_008253.1"/>
</dbReference>
<dbReference type="SMR" id="Q0TKG7"/>
<dbReference type="GeneID" id="86945388"/>
<dbReference type="KEGG" id="ecp:ECP_0535"/>
<dbReference type="HOGENOM" id="CLU_032354_1_2_6"/>
<dbReference type="UniPathway" id="UPA00588">
    <property type="reaction ID" value="UER00649"/>
</dbReference>
<dbReference type="Proteomes" id="UP000009182">
    <property type="component" value="Chromosome"/>
</dbReference>
<dbReference type="GO" id="GO:0005737">
    <property type="term" value="C:cytoplasm"/>
    <property type="evidence" value="ECO:0007669"/>
    <property type="project" value="UniProtKB-SubCell"/>
</dbReference>
<dbReference type="GO" id="GO:0004017">
    <property type="term" value="F:adenylate kinase activity"/>
    <property type="evidence" value="ECO:0007669"/>
    <property type="project" value="UniProtKB-UniRule"/>
</dbReference>
<dbReference type="GO" id="GO:0005524">
    <property type="term" value="F:ATP binding"/>
    <property type="evidence" value="ECO:0007669"/>
    <property type="project" value="UniProtKB-UniRule"/>
</dbReference>
<dbReference type="GO" id="GO:0044209">
    <property type="term" value="P:AMP salvage"/>
    <property type="evidence" value="ECO:0007669"/>
    <property type="project" value="UniProtKB-UniRule"/>
</dbReference>
<dbReference type="CDD" id="cd01428">
    <property type="entry name" value="ADK"/>
    <property type="match status" value="1"/>
</dbReference>
<dbReference type="FunFam" id="3.40.50.300:FF:000106">
    <property type="entry name" value="Adenylate kinase mitochondrial"/>
    <property type="match status" value="1"/>
</dbReference>
<dbReference type="Gene3D" id="3.40.50.300">
    <property type="entry name" value="P-loop containing nucleotide triphosphate hydrolases"/>
    <property type="match status" value="1"/>
</dbReference>
<dbReference type="HAMAP" id="MF_00235">
    <property type="entry name" value="Adenylate_kinase_Adk"/>
    <property type="match status" value="1"/>
</dbReference>
<dbReference type="InterPro" id="IPR006259">
    <property type="entry name" value="Adenyl_kin_sub"/>
</dbReference>
<dbReference type="InterPro" id="IPR000850">
    <property type="entry name" value="Adenylat/UMP-CMP_kin"/>
</dbReference>
<dbReference type="InterPro" id="IPR033690">
    <property type="entry name" value="Adenylat_kinase_CS"/>
</dbReference>
<dbReference type="InterPro" id="IPR007862">
    <property type="entry name" value="Adenylate_kinase_lid-dom"/>
</dbReference>
<dbReference type="InterPro" id="IPR027417">
    <property type="entry name" value="P-loop_NTPase"/>
</dbReference>
<dbReference type="NCBIfam" id="TIGR01351">
    <property type="entry name" value="adk"/>
    <property type="match status" value="1"/>
</dbReference>
<dbReference type="NCBIfam" id="NF001379">
    <property type="entry name" value="PRK00279.1-1"/>
    <property type="match status" value="1"/>
</dbReference>
<dbReference type="NCBIfam" id="NF001380">
    <property type="entry name" value="PRK00279.1-2"/>
    <property type="match status" value="1"/>
</dbReference>
<dbReference type="NCBIfam" id="NF001381">
    <property type="entry name" value="PRK00279.1-3"/>
    <property type="match status" value="1"/>
</dbReference>
<dbReference type="NCBIfam" id="NF011100">
    <property type="entry name" value="PRK14527.1"/>
    <property type="match status" value="1"/>
</dbReference>
<dbReference type="PANTHER" id="PTHR23359">
    <property type="entry name" value="NUCLEOTIDE KINASE"/>
    <property type="match status" value="1"/>
</dbReference>
<dbReference type="Pfam" id="PF00406">
    <property type="entry name" value="ADK"/>
    <property type="match status" value="1"/>
</dbReference>
<dbReference type="Pfam" id="PF05191">
    <property type="entry name" value="ADK_lid"/>
    <property type="match status" value="1"/>
</dbReference>
<dbReference type="PRINTS" id="PR00094">
    <property type="entry name" value="ADENYLTKNASE"/>
</dbReference>
<dbReference type="SUPFAM" id="SSF52540">
    <property type="entry name" value="P-loop containing nucleoside triphosphate hydrolases"/>
    <property type="match status" value="1"/>
</dbReference>
<dbReference type="PROSITE" id="PS00113">
    <property type="entry name" value="ADENYLATE_KINASE"/>
    <property type="match status" value="1"/>
</dbReference>
<sequence>MRIILLGAPGAGKGTQAQFIMEKYGIPQISTGDMLRAAVKSGSELGKQAKDIMDAGKLVTDELVIALVKERIAQEDCRNGFLLDGFPRTIPQADAMKEAGINVDYVLEFDVPDELIVDRIVGRRVHAPSGRVYHVKFNPPKVEGKDDVTGEELTTRKDDQEETVRKRLVEYHQMTAPLIGYYSKEAEAGNTKYAKVDGTKPVAEVRAALEKILG</sequence>
<protein>
    <recommendedName>
        <fullName evidence="2">Adenylate kinase</fullName>
        <shortName evidence="2">AK</shortName>
        <ecNumber evidence="2">2.7.4.3</ecNumber>
    </recommendedName>
    <alternativeName>
        <fullName evidence="2">ATP-AMP transphosphorylase</fullName>
    </alternativeName>
    <alternativeName>
        <fullName evidence="2">ATP:AMP phosphotransferase</fullName>
    </alternativeName>
    <alternativeName>
        <fullName evidence="2">Adenylate monophosphate kinase</fullName>
    </alternativeName>
</protein>
<name>KAD_ECOL5</name>
<evidence type="ECO:0000250" key="1"/>
<evidence type="ECO:0000255" key="2">
    <source>
        <dbReference type="HAMAP-Rule" id="MF_00235"/>
    </source>
</evidence>
<accession>Q0TKG7</accession>
<comment type="function">
    <text evidence="2">Catalyzes the reversible transfer of the terminal phosphate group between ATP and AMP. Plays an important role in cellular energy homeostasis and in adenine nucleotide metabolism.</text>
</comment>
<comment type="catalytic activity">
    <reaction evidence="2">
        <text>AMP + ATP = 2 ADP</text>
        <dbReference type="Rhea" id="RHEA:12973"/>
        <dbReference type="ChEBI" id="CHEBI:30616"/>
        <dbReference type="ChEBI" id="CHEBI:456215"/>
        <dbReference type="ChEBI" id="CHEBI:456216"/>
        <dbReference type="EC" id="2.7.4.3"/>
    </reaction>
</comment>
<comment type="pathway">
    <text evidence="2">Purine metabolism; AMP biosynthesis via salvage pathway; AMP from ADP: step 1/1.</text>
</comment>
<comment type="subunit">
    <text evidence="2">Monomer.</text>
</comment>
<comment type="subcellular location">
    <subcellularLocation>
        <location evidence="2">Cytoplasm</location>
    </subcellularLocation>
</comment>
<comment type="domain">
    <text evidence="2">Consists of three domains, a large central CORE domain and two small peripheral domains, NMPbind and LID, which undergo movements during catalysis. The LID domain closes over the site of phosphoryl transfer upon ATP binding. Assembling and dissambling the active center during each catalytic cycle provides an effective means to prevent ATP hydrolysis.</text>
</comment>
<comment type="similarity">
    <text evidence="2">Belongs to the adenylate kinase family.</text>
</comment>
<organism>
    <name type="scientific">Escherichia coli O6:K15:H31 (strain 536 / UPEC)</name>
    <dbReference type="NCBI Taxonomy" id="362663"/>
    <lineage>
        <taxon>Bacteria</taxon>
        <taxon>Pseudomonadati</taxon>
        <taxon>Pseudomonadota</taxon>
        <taxon>Gammaproteobacteria</taxon>
        <taxon>Enterobacterales</taxon>
        <taxon>Enterobacteriaceae</taxon>
        <taxon>Escherichia</taxon>
    </lineage>
</organism>
<gene>
    <name evidence="2" type="primary">adk</name>
    <name type="ordered locus">ECP_0535</name>
</gene>